<accession>Q92047</accession>
<reference key="1">
    <citation type="journal article" date="1997" name="Comp. Biochem. Physiol.">
        <title>Molecular phylogenetics of a protein repair methyltransferase.</title>
        <authorList>
            <person name="Kagan R.M."/>
            <person name="McFadden H.J."/>
            <person name="McFadden P.N."/>
            <person name="O'Connor C."/>
            <person name="Clarke S."/>
        </authorList>
    </citation>
    <scope>NUCLEOTIDE SEQUENCE [MRNA]</scope>
</reference>
<reference key="2">
    <citation type="submission" date="2004-07" db="EMBL/GenBank/DDBJ databases">
        <authorList>
            <consortium name="NIH - Zebrafish Gene Collection (ZGC) project"/>
        </authorList>
    </citation>
    <scope>NUCLEOTIDE SEQUENCE [LARGE SCALE MRNA]</scope>
    <source>
        <tissue>Embryo</tissue>
    </source>
</reference>
<proteinExistence type="evidence at transcript level"/>
<name>PIMT_DANRE</name>
<gene>
    <name type="primary">pcmt</name>
</gene>
<evidence type="ECO:0000250" key="1">
    <source>
        <dbReference type="UniProtKB" id="P22061"/>
    </source>
</evidence>
<evidence type="ECO:0000250" key="2">
    <source>
        <dbReference type="UniProtKB" id="P23506"/>
    </source>
</evidence>
<evidence type="ECO:0000250" key="3">
    <source>
        <dbReference type="UniProtKB" id="Q27869"/>
    </source>
</evidence>
<evidence type="ECO:0000305" key="4"/>
<dbReference type="EC" id="2.1.1.77" evidence="2"/>
<dbReference type="EMBL" id="U37434">
    <property type="protein sequence ID" value="AAA96020.1"/>
    <property type="molecule type" value="mRNA"/>
</dbReference>
<dbReference type="EMBL" id="BC075735">
    <property type="protein sequence ID" value="AAH75735.1"/>
    <property type="molecule type" value="mRNA"/>
</dbReference>
<dbReference type="RefSeq" id="NP_571540.1">
    <property type="nucleotide sequence ID" value="NM_131465.3"/>
</dbReference>
<dbReference type="SMR" id="Q92047"/>
<dbReference type="FunCoup" id="Q92047">
    <property type="interactions" value="1447"/>
</dbReference>
<dbReference type="STRING" id="7955.ENSDARP00000119861"/>
<dbReference type="PaxDb" id="7955-ENSDARP00000119861"/>
<dbReference type="DNASU" id="30751"/>
<dbReference type="GeneID" id="30751"/>
<dbReference type="KEGG" id="dre:30751"/>
<dbReference type="AGR" id="ZFIN:ZDB-GENE-990415-134"/>
<dbReference type="CTD" id="30751"/>
<dbReference type="ZFIN" id="ZDB-GENE-990415-134">
    <property type="gene designation" value="pcmt"/>
</dbReference>
<dbReference type="eggNOG" id="KOG1661">
    <property type="taxonomic scope" value="Eukaryota"/>
</dbReference>
<dbReference type="HOGENOM" id="CLU_055432_0_4_1"/>
<dbReference type="InParanoid" id="Q92047"/>
<dbReference type="OrthoDB" id="73890at2759"/>
<dbReference type="PhylomeDB" id="Q92047"/>
<dbReference type="Reactome" id="R-DRE-5676934">
    <property type="pathway name" value="Protein repair"/>
</dbReference>
<dbReference type="PRO" id="PR:Q92047"/>
<dbReference type="Proteomes" id="UP000000437">
    <property type="component" value="Chromosome 20"/>
</dbReference>
<dbReference type="GO" id="GO:0005737">
    <property type="term" value="C:cytoplasm"/>
    <property type="evidence" value="ECO:0000318"/>
    <property type="project" value="GO_Central"/>
</dbReference>
<dbReference type="GO" id="GO:0005829">
    <property type="term" value="C:cytosol"/>
    <property type="evidence" value="ECO:0007669"/>
    <property type="project" value="UniProtKB-SubCell"/>
</dbReference>
<dbReference type="GO" id="GO:0004719">
    <property type="term" value="F:protein-L-isoaspartate (D-aspartate) O-methyltransferase activity"/>
    <property type="evidence" value="ECO:0000314"/>
    <property type="project" value="ZFIN"/>
</dbReference>
<dbReference type="GO" id="GO:0006479">
    <property type="term" value="P:protein methylation"/>
    <property type="evidence" value="ECO:0000250"/>
    <property type="project" value="UniProtKB"/>
</dbReference>
<dbReference type="GO" id="GO:0050848">
    <property type="term" value="P:regulation of calcium-mediated signaling"/>
    <property type="evidence" value="ECO:0000316"/>
    <property type="project" value="ZFIN"/>
</dbReference>
<dbReference type="CDD" id="cd02440">
    <property type="entry name" value="AdoMet_MTases"/>
    <property type="match status" value="1"/>
</dbReference>
<dbReference type="FunFam" id="3.40.50.150:FF:000027">
    <property type="entry name" value="Protein-L-isoaspartate O-methyltransferase"/>
    <property type="match status" value="1"/>
</dbReference>
<dbReference type="Gene3D" id="3.40.50.150">
    <property type="entry name" value="Vaccinia Virus protein VP39"/>
    <property type="match status" value="1"/>
</dbReference>
<dbReference type="InterPro" id="IPR000682">
    <property type="entry name" value="PCMT"/>
</dbReference>
<dbReference type="InterPro" id="IPR029063">
    <property type="entry name" value="SAM-dependent_MTases_sf"/>
</dbReference>
<dbReference type="NCBIfam" id="TIGR00080">
    <property type="entry name" value="pimt"/>
    <property type="match status" value="1"/>
</dbReference>
<dbReference type="PANTHER" id="PTHR11579">
    <property type="entry name" value="PROTEIN-L-ISOASPARTATE O-METHYLTRANSFERASE"/>
    <property type="match status" value="1"/>
</dbReference>
<dbReference type="PANTHER" id="PTHR11579:SF7">
    <property type="entry name" value="PROTEIN-L-ISOASPARTATE(D-ASPARTATE) O-METHYLTRANSFERASE"/>
    <property type="match status" value="1"/>
</dbReference>
<dbReference type="Pfam" id="PF01135">
    <property type="entry name" value="PCMT"/>
    <property type="match status" value="1"/>
</dbReference>
<dbReference type="SUPFAM" id="SSF53335">
    <property type="entry name" value="S-adenosyl-L-methionine-dependent methyltransferases"/>
    <property type="match status" value="1"/>
</dbReference>
<dbReference type="PROSITE" id="PS01279">
    <property type="entry name" value="PCMT"/>
    <property type="match status" value="1"/>
</dbReference>
<sequence>MAWKSGGASHAELVNNLRKNGIIKSDRVYEVMLATDRSHFSRCNPYMDSPQSIGYQATISAPHMHAYALELLHDHLYEGAKALDVGSGSGILSVCFSRMVGPTGKVIGIDHIKELVEDSIANVKKDDPSLITSGRIKLIVGDGRMGFTEEAPYDAIHVGAAAPTVPQALLDQLKPGGRLILPVGPAGGNQMLEQYDKLEDGSTKMKPLMGVIYVPLTDKDKQWSRDEL</sequence>
<protein>
    <recommendedName>
        <fullName evidence="2">Protein-L-isoaspartate(D-aspartate) O-methyltransferase</fullName>
        <shortName>PIMT</shortName>
        <ecNumber evidence="2">2.1.1.77</ecNumber>
    </recommendedName>
    <alternativeName>
        <fullName>L-isoaspartyl protein carboxyl methyltransferase</fullName>
    </alternativeName>
    <alternativeName>
        <fullName>Protein L-isoaspartyl/D-aspartyl methyltransferase</fullName>
    </alternativeName>
    <alternativeName>
        <fullName>Protein-beta-aspartate methyltransferase</fullName>
    </alternativeName>
</protein>
<feature type="initiator methionine" description="Removed" evidence="1">
    <location>
        <position position="1"/>
    </location>
</feature>
<feature type="chain" id="PRO_0000111879" description="Protein-L-isoaspartate(D-aspartate) O-methyltransferase">
    <location>
        <begin position="2"/>
        <end position="228"/>
    </location>
</feature>
<feature type="active site" evidence="3">
    <location>
        <position position="60"/>
    </location>
</feature>
<feature type="binding site" evidence="1">
    <location>
        <begin position="57"/>
        <end position="60"/>
    </location>
    <ligand>
        <name>S-adenosyl-L-homocysteine</name>
        <dbReference type="ChEBI" id="CHEBI:57856"/>
    </ligand>
</feature>
<feature type="binding site" evidence="1">
    <location>
        <position position="65"/>
    </location>
    <ligand>
        <name>S-adenosyl-L-homocysteine</name>
        <dbReference type="ChEBI" id="CHEBI:57856"/>
    </ligand>
</feature>
<feature type="binding site" evidence="1">
    <location>
        <position position="89"/>
    </location>
    <ligand>
        <name>S-adenosyl-L-homocysteine</name>
        <dbReference type="ChEBI" id="CHEBI:57856"/>
    </ligand>
</feature>
<feature type="binding site" evidence="1">
    <location>
        <begin position="110"/>
        <end position="111"/>
    </location>
    <ligand>
        <name>S-adenosyl-L-homocysteine</name>
        <dbReference type="ChEBI" id="CHEBI:57856"/>
    </ligand>
</feature>
<feature type="binding site" evidence="1">
    <location>
        <begin position="142"/>
        <end position="143"/>
    </location>
    <ligand>
        <name>S-adenosyl-L-homocysteine</name>
        <dbReference type="ChEBI" id="CHEBI:57856"/>
    </ligand>
</feature>
<feature type="binding site" evidence="1">
    <location>
        <position position="217"/>
    </location>
    <ligand>
        <name>S-adenosyl-L-homocysteine</name>
        <dbReference type="ChEBI" id="CHEBI:57856"/>
    </ligand>
</feature>
<feature type="binding site" evidence="1">
    <location>
        <position position="222"/>
    </location>
    <ligand>
        <name>S-adenosyl-L-homocysteine</name>
        <dbReference type="ChEBI" id="CHEBI:57856"/>
    </ligand>
</feature>
<feature type="modified residue" description="N-acetylalanine" evidence="1">
    <location>
        <position position="2"/>
    </location>
</feature>
<organism>
    <name type="scientific">Danio rerio</name>
    <name type="common">Zebrafish</name>
    <name type="synonym">Brachydanio rerio</name>
    <dbReference type="NCBI Taxonomy" id="7955"/>
    <lineage>
        <taxon>Eukaryota</taxon>
        <taxon>Metazoa</taxon>
        <taxon>Chordata</taxon>
        <taxon>Craniata</taxon>
        <taxon>Vertebrata</taxon>
        <taxon>Euteleostomi</taxon>
        <taxon>Actinopterygii</taxon>
        <taxon>Neopterygii</taxon>
        <taxon>Teleostei</taxon>
        <taxon>Ostariophysi</taxon>
        <taxon>Cypriniformes</taxon>
        <taxon>Danionidae</taxon>
        <taxon>Danioninae</taxon>
        <taxon>Danio</taxon>
    </lineage>
</organism>
<comment type="function">
    <text evidence="2">Initiates the repair of damaged proteins by catalyzing methyl esterification of L-isoaspartyl and D-aspartyl residues produced by spontaneous isomerization and racemization of L-aspartyl and L-asparaginyl residues in aging peptides and proteins.</text>
</comment>
<comment type="catalytic activity">
    <reaction evidence="2">
        <text>[protein]-L-isoaspartate + S-adenosyl-L-methionine = [protein]-L-isoaspartate alpha-methyl ester + S-adenosyl-L-homocysteine</text>
        <dbReference type="Rhea" id="RHEA:12705"/>
        <dbReference type="Rhea" id="RHEA-COMP:12143"/>
        <dbReference type="Rhea" id="RHEA-COMP:12144"/>
        <dbReference type="ChEBI" id="CHEBI:57856"/>
        <dbReference type="ChEBI" id="CHEBI:59789"/>
        <dbReference type="ChEBI" id="CHEBI:90596"/>
        <dbReference type="ChEBI" id="CHEBI:90598"/>
        <dbReference type="EC" id="2.1.1.77"/>
    </reaction>
    <physiologicalReaction direction="left-to-right" evidence="2">
        <dbReference type="Rhea" id="RHEA:12706"/>
    </physiologicalReaction>
</comment>
<comment type="subunit">
    <text evidence="1">Monomer.</text>
</comment>
<comment type="subcellular location">
    <subcellularLocation>
        <location evidence="1">Cytoplasm</location>
        <location evidence="1">Cytosol</location>
    </subcellularLocation>
</comment>
<comment type="similarity">
    <text evidence="4">Belongs to the methyltransferase superfamily. L-isoaspartyl/D-aspartyl protein methyltransferase family.</text>
</comment>
<keyword id="KW-0007">Acetylation</keyword>
<keyword id="KW-0963">Cytoplasm</keyword>
<keyword id="KW-0489">Methyltransferase</keyword>
<keyword id="KW-1185">Reference proteome</keyword>
<keyword id="KW-0949">S-adenosyl-L-methionine</keyword>
<keyword id="KW-0808">Transferase</keyword>